<protein>
    <recommendedName>
        <fullName evidence="1">Ribonuclease P protein component</fullName>
        <shortName evidence="1">RNase P protein</shortName>
        <shortName evidence="1">RNaseP protein</shortName>
        <ecNumber evidence="1">3.1.26.5</ecNumber>
    </recommendedName>
    <alternativeName>
        <fullName evidence="1">Protein C5</fullName>
    </alternativeName>
</protein>
<dbReference type="EC" id="3.1.26.5" evidence="1"/>
<dbReference type="EMBL" id="AE004091">
    <property type="protein sequence ID" value="AAG08954.1"/>
    <property type="molecule type" value="Genomic_DNA"/>
</dbReference>
<dbReference type="PIR" id="H82950">
    <property type="entry name" value="H82950"/>
</dbReference>
<dbReference type="RefSeq" id="NP_254256.1">
    <property type="nucleotide sequence ID" value="NC_002516.2"/>
</dbReference>
<dbReference type="RefSeq" id="WP_003100251.1">
    <property type="nucleotide sequence ID" value="NZ_QZGE01000012.1"/>
</dbReference>
<dbReference type="SMR" id="Q9HT05"/>
<dbReference type="FunCoup" id="Q9HT05">
    <property type="interactions" value="134"/>
</dbReference>
<dbReference type="STRING" id="208964.PA5569"/>
<dbReference type="PaxDb" id="208964-PA5569"/>
<dbReference type="DNASU" id="877910"/>
<dbReference type="GeneID" id="877910"/>
<dbReference type="KEGG" id="pae:PA5569"/>
<dbReference type="PATRIC" id="fig|208964.12.peg.5835"/>
<dbReference type="PseudoCAP" id="PA5569"/>
<dbReference type="HOGENOM" id="CLU_117179_11_0_6"/>
<dbReference type="InParanoid" id="Q9HT05"/>
<dbReference type="OrthoDB" id="9796422at2"/>
<dbReference type="PhylomeDB" id="Q9HT05"/>
<dbReference type="BioCyc" id="PAER208964:G1FZ6-5696-MONOMER"/>
<dbReference type="Proteomes" id="UP000002438">
    <property type="component" value="Chromosome"/>
</dbReference>
<dbReference type="GO" id="GO:0030677">
    <property type="term" value="C:ribonuclease P complex"/>
    <property type="evidence" value="ECO:0000318"/>
    <property type="project" value="GO_Central"/>
</dbReference>
<dbReference type="GO" id="GO:0042781">
    <property type="term" value="F:3'-tRNA processing endoribonuclease activity"/>
    <property type="evidence" value="ECO:0000318"/>
    <property type="project" value="GO_Central"/>
</dbReference>
<dbReference type="GO" id="GO:0004526">
    <property type="term" value="F:ribonuclease P activity"/>
    <property type="evidence" value="ECO:0000318"/>
    <property type="project" value="GO_Central"/>
</dbReference>
<dbReference type="GO" id="GO:0000049">
    <property type="term" value="F:tRNA binding"/>
    <property type="evidence" value="ECO:0007669"/>
    <property type="project" value="UniProtKB-UniRule"/>
</dbReference>
<dbReference type="GO" id="GO:0042780">
    <property type="term" value="P:tRNA 3'-end processing"/>
    <property type="evidence" value="ECO:0000318"/>
    <property type="project" value="GO_Central"/>
</dbReference>
<dbReference type="GO" id="GO:0001682">
    <property type="term" value="P:tRNA 5'-leader removal"/>
    <property type="evidence" value="ECO:0007669"/>
    <property type="project" value="UniProtKB-UniRule"/>
</dbReference>
<dbReference type="FunFam" id="3.30.230.10:FF:000105">
    <property type="entry name" value="Ribonuclease P protein component"/>
    <property type="match status" value="1"/>
</dbReference>
<dbReference type="Gene3D" id="3.30.230.10">
    <property type="match status" value="1"/>
</dbReference>
<dbReference type="HAMAP" id="MF_00227">
    <property type="entry name" value="RNase_P"/>
    <property type="match status" value="1"/>
</dbReference>
<dbReference type="InterPro" id="IPR020568">
    <property type="entry name" value="Ribosomal_Su5_D2-typ_SF"/>
</dbReference>
<dbReference type="InterPro" id="IPR014721">
    <property type="entry name" value="Ribsml_uS5_D2-typ_fold_subgr"/>
</dbReference>
<dbReference type="InterPro" id="IPR000100">
    <property type="entry name" value="RNase_P"/>
</dbReference>
<dbReference type="InterPro" id="IPR020539">
    <property type="entry name" value="RNase_P_CS"/>
</dbReference>
<dbReference type="NCBIfam" id="TIGR00188">
    <property type="entry name" value="rnpA"/>
    <property type="match status" value="1"/>
</dbReference>
<dbReference type="PANTHER" id="PTHR33992">
    <property type="entry name" value="RIBONUCLEASE P PROTEIN COMPONENT"/>
    <property type="match status" value="1"/>
</dbReference>
<dbReference type="PANTHER" id="PTHR33992:SF1">
    <property type="entry name" value="RIBONUCLEASE P PROTEIN COMPONENT"/>
    <property type="match status" value="1"/>
</dbReference>
<dbReference type="Pfam" id="PF00825">
    <property type="entry name" value="Ribonuclease_P"/>
    <property type="match status" value="1"/>
</dbReference>
<dbReference type="SUPFAM" id="SSF54211">
    <property type="entry name" value="Ribosomal protein S5 domain 2-like"/>
    <property type="match status" value="1"/>
</dbReference>
<dbReference type="PROSITE" id="PS00648">
    <property type="entry name" value="RIBONUCLEASE_P"/>
    <property type="match status" value="1"/>
</dbReference>
<comment type="function">
    <text evidence="1">RNaseP catalyzes the removal of the 5'-leader sequence from pre-tRNA to produce the mature 5'-terminus. It can also cleave other RNA substrates such as 4.5S RNA. The protein component plays an auxiliary but essential role in vivo by binding to the 5'-leader sequence and broadening the substrate specificity of the ribozyme.</text>
</comment>
<comment type="catalytic activity">
    <reaction evidence="1">
        <text>Endonucleolytic cleavage of RNA, removing 5'-extranucleotides from tRNA precursor.</text>
        <dbReference type="EC" id="3.1.26.5"/>
    </reaction>
</comment>
<comment type="subunit">
    <text evidence="1">Consists of a catalytic RNA component (M1 or rnpB) and a protein subunit.</text>
</comment>
<comment type="similarity">
    <text evidence="1">Belongs to the RnpA family.</text>
</comment>
<organism>
    <name type="scientific">Pseudomonas aeruginosa (strain ATCC 15692 / DSM 22644 / CIP 104116 / JCM 14847 / LMG 12228 / 1C / PRS 101 / PAO1)</name>
    <dbReference type="NCBI Taxonomy" id="208964"/>
    <lineage>
        <taxon>Bacteria</taxon>
        <taxon>Pseudomonadati</taxon>
        <taxon>Pseudomonadota</taxon>
        <taxon>Gammaproteobacteria</taxon>
        <taxon>Pseudomonadales</taxon>
        <taxon>Pseudomonadaceae</taxon>
        <taxon>Pseudomonas</taxon>
    </lineage>
</organism>
<evidence type="ECO:0000255" key="1">
    <source>
        <dbReference type="HAMAP-Rule" id="MF_00227"/>
    </source>
</evidence>
<sequence length="135" mass="15314">MVSRDFDRDKRLLTARQFSAVFDSPTGKVPGKHVLLLARENGLDHPRLGLVIGKKNVKLAVQRNRLKRLIRESFRHNQETLAGWDIVVIARKGLGELENPELHQQFGKLWKRLLRNRPRTESPADAPGVADGTHA</sequence>
<proteinExistence type="inferred from homology"/>
<feature type="chain" id="PRO_0000198509" description="Ribonuclease P protein component">
    <location>
        <begin position="1"/>
        <end position="135"/>
    </location>
</feature>
<accession>Q9HT05</accession>
<name>RNPA_PSEAE</name>
<reference key="1">
    <citation type="journal article" date="2000" name="Nature">
        <title>Complete genome sequence of Pseudomonas aeruginosa PAO1, an opportunistic pathogen.</title>
        <authorList>
            <person name="Stover C.K."/>
            <person name="Pham X.-Q.T."/>
            <person name="Erwin A.L."/>
            <person name="Mizoguchi S.D."/>
            <person name="Warrener P."/>
            <person name="Hickey M.J."/>
            <person name="Brinkman F.S.L."/>
            <person name="Hufnagle W.O."/>
            <person name="Kowalik D.J."/>
            <person name="Lagrou M."/>
            <person name="Garber R.L."/>
            <person name="Goltry L."/>
            <person name="Tolentino E."/>
            <person name="Westbrock-Wadman S."/>
            <person name="Yuan Y."/>
            <person name="Brody L.L."/>
            <person name="Coulter S.N."/>
            <person name="Folger K.R."/>
            <person name="Kas A."/>
            <person name="Larbig K."/>
            <person name="Lim R.M."/>
            <person name="Smith K.A."/>
            <person name="Spencer D.H."/>
            <person name="Wong G.K.-S."/>
            <person name="Wu Z."/>
            <person name="Paulsen I.T."/>
            <person name="Reizer J."/>
            <person name="Saier M.H. Jr."/>
            <person name="Hancock R.E.W."/>
            <person name="Lory S."/>
            <person name="Olson M.V."/>
        </authorList>
    </citation>
    <scope>NUCLEOTIDE SEQUENCE [LARGE SCALE GENOMIC DNA]</scope>
    <source>
        <strain>ATCC 15692 / DSM 22644 / CIP 104116 / JCM 14847 / LMG 12228 / 1C / PRS 101 / PAO1</strain>
    </source>
</reference>
<keyword id="KW-0255">Endonuclease</keyword>
<keyword id="KW-0378">Hydrolase</keyword>
<keyword id="KW-0540">Nuclease</keyword>
<keyword id="KW-1185">Reference proteome</keyword>
<keyword id="KW-0694">RNA-binding</keyword>
<keyword id="KW-0819">tRNA processing</keyword>
<gene>
    <name evidence="1" type="primary">rnpA</name>
    <name type="ordered locus">PA5569</name>
</gene>